<organism evidence="8">
    <name type="scientific">Caenorhabditis elegans</name>
    <dbReference type="NCBI Taxonomy" id="6239"/>
    <lineage>
        <taxon>Eukaryota</taxon>
        <taxon>Metazoa</taxon>
        <taxon>Ecdysozoa</taxon>
        <taxon>Nematoda</taxon>
        <taxon>Chromadorea</taxon>
        <taxon>Rhabditida</taxon>
        <taxon>Rhabditina</taxon>
        <taxon>Rhabditomorpha</taxon>
        <taxon>Rhabditoidea</taxon>
        <taxon>Rhabditidae</taxon>
        <taxon>Peloderinae</taxon>
        <taxon>Caenorhabditis</taxon>
    </lineage>
</organism>
<dbReference type="EMBL" id="Z81523">
    <property type="protein sequence ID" value="CAB04241.1"/>
    <property type="molecule type" value="Genomic_DNA"/>
</dbReference>
<dbReference type="EMBL" id="Z81523">
    <property type="protein sequence ID" value="CAB04248.1"/>
    <property type="molecule type" value="Genomic_DNA"/>
</dbReference>
<dbReference type="PIR" id="T21673">
    <property type="entry name" value="T21673"/>
</dbReference>
<dbReference type="PIR" id="T21680">
    <property type="entry name" value="T21680"/>
</dbReference>
<dbReference type="RefSeq" id="NP_492411.1">
    <molecule id="P91868-1"/>
    <property type="nucleotide sequence ID" value="NM_060010.6"/>
</dbReference>
<dbReference type="RefSeq" id="NP_492412.1">
    <molecule id="P91868-2"/>
    <property type="nucleotide sequence ID" value="NM_060011.5"/>
</dbReference>
<dbReference type="SMR" id="P91868"/>
<dbReference type="FunCoup" id="P91868">
    <property type="interactions" value="133"/>
</dbReference>
<dbReference type="IntAct" id="P91868">
    <property type="interactions" value="1"/>
</dbReference>
<dbReference type="MINT" id="P91868"/>
<dbReference type="STRING" id="6239.F32H2.1a.1"/>
<dbReference type="PaxDb" id="6239-F32H2.1a"/>
<dbReference type="PeptideAtlas" id="P91868"/>
<dbReference type="EnsemblMetazoa" id="F32H2.1a.1">
    <molecule id="P91868-1"/>
    <property type="protein sequence ID" value="F32H2.1a.1"/>
    <property type="gene ID" value="WBGene00001568"/>
</dbReference>
<dbReference type="EnsemblMetazoa" id="F32H2.1b.1">
    <molecule id="P91868-2"/>
    <property type="protein sequence ID" value="F32H2.1b.1"/>
    <property type="gene ID" value="WBGene00001568"/>
</dbReference>
<dbReference type="GeneID" id="172711"/>
<dbReference type="KEGG" id="cel:CELE_F32H2.1"/>
<dbReference type="UCSC" id="F32H2.1b">
    <property type="organism name" value="c. elegans"/>
</dbReference>
<dbReference type="AGR" id="WB:WBGene00001568"/>
<dbReference type="CTD" id="172711"/>
<dbReference type="WormBase" id="F32H2.1a">
    <molecule id="P91868-1"/>
    <property type="protein sequence ID" value="CE09876"/>
    <property type="gene ID" value="WBGene00001568"/>
    <property type="gene designation" value="snpc-4"/>
</dbReference>
<dbReference type="WormBase" id="F32H2.1b">
    <molecule id="P91868-2"/>
    <property type="protein sequence ID" value="CE17749"/>
    <property type="gene ID" value="WBGene00001568"/>
    <property type="gene designation" value="snpc-4"/>
</dbReference>
<dbReference type="eggNOG" id="KOG0049">
    <property type="taxonomic scope" value="Eukaryota"/>
</dbReference>
<dbReference type="GeneTree" id="ENSGT00940000160404"/>
<dbReference type="HOGENOM" id="CLU_318916_0_0_1"/>
<dbReference type="InParanoid" id="P91868"/>
<dbReference type="OMA" id="GNWAKCQ"/>
<dbReference type="OrthoDB" id="2143914at2759"/>
<dbReference type="Reactome" id="R-CEL-6807505">
    <property type="pathway name" value="RNA polymerase II transcribes snRNA genes"/>
</dbReference>
<dbReference type="PRO" id="PR:P91868"/>
<dbReference type="Proteomes" id="UP000001940">
    <property type="component" value="Chromosome I"/>
</dbReference>
<dbReference type="Bgee" id="WBGene00001568">
    <property type="expression patterns" value="Expressed in embryo and 4 other cell types or tissues"/>
</dbReference>
<dbReference type="GO" id="GO:0005634">
    <property type="term" value="C:nucleus"/>
    <property type="evidence" value="ECO:0007669"/>
    <property type="project" value="UniProtKB-SubCell"/>
</dbReference>
<dbReference type="GO" id="GO:0019185">
    <property type="term" value="C:snRNA-activating protein complex"/>
    <property type="evidence" value="ECO:0000318"/>
    <property type="project" value="GO_Central"/>
</dbReference>
<dbReference type="GO" id="GO:0001006">
    <property type="term" value="F:RNA polymerase III type 3 promoter sequence-specific DNA binding"/>
    <property type="evidence" value="ECO:0000318"/>
    <property type="project" value="GO_Central"/>
</dbReference>
<dbReference type="GO" id="GO:0006457">
    <property type="term" value="P:protein folding"/>
    <property type="evidence" value="ECO:0000315"/>
    <property type="project" value="WormBase"/>
</dbReference>
<dbReference type="GO" id="GO:0042795">
    <property type="term" value="P:snRNA transcription by RNA polymerase II"/>
    <property type="evidence" value="ECO:0000318"/>
    <property type="project" value="GO_Central"/>
</dbReference>
<dbReference type="GO" id="GO:0042796">
    <property type="term" value="P:snRNA transcription by RNA polymerase III"/>
    <property type="evidence" value="ECO:0000318"/>
    <property type="project" value="GO_Central"/>
</dbReference>
<dbReference type="CDD" id="cd00167">
    <property type="entry name" value="SANT"/>
    <property type="match status" value="4"/>
</dbReference>
<dbReference type="Gene3D" id="1.10.10.60">
    <property type="entry name" value="Homeodomain-like"/>
    <property type="match status" value="3"/>
</dbReference>
<dbReference type="InterPro" id="IPR009057">
    <property type="entry name" value="Homeodomain-like_sf"/>
</dbReference>
<dbReference type="InterPro" id="IPR051575">
    <property type="entry name" value="Myb-like_DNA-bd"/>
</dbReference>
<dbReference type="InterPro" id="IPR017930">
    <property type="entry name" value="Myb_dom"/>
</dbReference>
<dbReference type="InterPro" id="IPR001005">
    <property type="entry name" value="SANT/Myb"/>
</dbReference>
<dbReference type="PANTHER" id="PTHR46621">
    <property type="entry name" value="SNRNA-ACTIVATING PROTEIN COMPLEX SUBUNIT 4"/>
    <property type="match status" value="1"/>
</dbReference>
<dbReference type="PANTHER" id="PTHR46621:SF1">
    <property type="entry name" value="SNRNA-ACTIVATING PROTEIN COMPLEX SUBUNIT 4"/>
    <property type="match status" value="1"/>
</dbReference>
<dbReference type="Pfam" id="PF13921">
    <property type="entry name" value="Myb_DNA-bind_6"/>
    <property type="match status" value="1"/>
</dbReference>
<dbReference type="Pfam" id="PF00249">
    <property type="entry name" value="Myb_DNA-binding"/>
    <property type="match status" value="3"/>
</dbReference>
<dbReference type="SMART" id="SM00717">
    <property type="entry name" value="SANT"/>
    <property type="match status" value="5"/>
</dbReference>
<dbReference type="SUPFAM" id="SSF46689">
    <property type="entry name" value="Homeodomain-like"/>
    <property type="match status" value="3"/>
</dbReference>
<dbReference type="PROSITE" id="PS51294">
    <property type="entry name" value="HTH_MYB"/>
    <property type="match status" value="3"/>
</dbReference>
<dbReference type="PROSITE" id="PS50090">
    <property type="entry name" value="MYB_LIKE"/>
    <property type="match status" value="2"/>
</dbReference>
<gene>
    <name evidence="9" type="primary">snpc-4</name>
    <name evidence="6" type="synonym">gei-11</name>
    <name evidence="9" type="ORF">F32H2.1</name>
</gene>
<protein>
    <recommendedName>
        <fullName evidence="9">snRNA-activating protein complex subunit 4 homolog</fullName>
        <shortName evidence="1">SNAPc subunit 4 homolog</shortName>
    </recommendedName>
</protein>
<name>SNPC4_CAEEL</name>
<proteinExistence type="evidence at transcript level"/>
<reference evidence="8" key="1">
    <citation type="journal article" date="1998" name="Science">
        <title>Genome sequence of the nematode C. elegans: a platform for investigating biology.</title>
        <authorList>
            <consortium name="The C. elegans sequencing consortium"/>
        </authorList>
    </citation>
    <scope>NUCLEOTIDE SEQUENCE [LARGE SCALE GENOMIC DNA]</scope>
    <source>
        <strain evidence="8">Bristol N2</strain>
    </source>
</reference>
<reference evidence="7" key="2">
    <citation type="journal article" date="2014" name="Dev. Cell">
        <title>The C. elegans SNAPc component SNPC-4 coats piRNA domains and is globally required for piRNA abundance.</title>
        <authorList>
            <person name="Kasper D.M."/>
            <person name="Wang G."/>
            <person name="Gardner K.E."/>
            <person name="Johnstone T.G."/>
            <person name="Reinke V."/>
        </authorList>
    </citation>
    <scope>FUNCTION</scope>
    <scope>SUBCELLULAR LOCATION</scope>
    <scope>TISSUE SPECIFICITY</scope>
    <scope>DEVELOPMENTAL STAGE</scope>
    <scope>DISRUPTION PHENOTYPE</scope>
</reference>
<sequence length="944" mass="109487">MSDLVMFEPGASTSTDVPTNTDQTAMSTTQVVDALECDTFEGLMNVNETYVEILDSALLSVQQHLDDNLKRQQQLKEEYRLYNRADITKRKVPVHLYMPPYFKDDNNMYPPMSSEAREKQVLKWFDPMMKEEKKWTPSEIKTLRTSVKNALVAHQVQPWCSRRDIVASKLRDADITTSNFDRRQWTMELEDLMRKIAYVREKSEEEVLTASADYTVVPWTAIANFDFKGSRTEWAVKSKWYNELNPKWNKEHWSNEEVEKLKYLRESPKFVSWPMLALNLGTNRTSYQCMEKYKTEVSQHSKEWSQDEDTKLIALTKITSINGHIQWDKVAQCMPGRTRQQVRTRFSHTLDASVKHGRWTDQEDVLLVCAVSRYGAKDWAKVAQAVQNRNDSQCRERWTNVLNRSAHVNERFTLVEDEQLLYAVKVFGKGNWAKCQMLLPKKTSRQLRRRYLQLIAAKLRLAAGFCNAVDAMKSGRRAPEEDELEQEDIVEAEQIPNELMKEVYEKFANENPDMNETPEEFYKRVSALERPAAARIRALKNKPDYQKIQDKINEIVQKHKNAAEIDKELHSSEILSSLTITEVDVRYMIERSKTLTRYYEARQFRKNVDQIGCRVRPIKIDLDPETMPTFDPNDAEDEKQMVIVESLCSVIRAHDVKEWGTKFWNEHRFTAPKYAKRFVENMVINKSKEVAEWYLHVNSKSCNQNDVHCPAKSTLPPTAASFDLHKMLQKARSGLNRLSAEHFYPLDVSLAQQFNFKNDEREGLDGDRRMHIGLSDEVTNSKEYANFYARMRSILLEPMRLGIARESSSDETKRLVRCLAEERACDEEQQVTCDQIRRRRMPDDEIYVTPTSISRELNNGMKIDTTELLANLDKNSAKKIRMKRKIGEVRCDTKIKLLPLVILATVATVAARPARPPRSSAGTPTPSHVSIDTESNISLKVELD</sequence>
<evidence type="ECO:0000250" key="1">
    <source>
        <dbReference type="UniProtKB" id="Q5SXM2"/>
    </source>
</evidence>
<evidence type="ECO:0000255" key="2">
    <source>
        <dbReference type="PROSITE-ProRule" id="PRU00133"/>
    </source>
</evidence>
<evidence type="ECO:0000255" key="3">
    <source>
        <dbReference type="PROSITE-ProRule" id="PRU00625"/>
    </source>
</evidence>
<evidence type="ECO:0000256" key="4">
    <source>
        <dbReference type="SAM" id="MobiDB-lite"/>
    </source>
</evidence>
<evidence type="ECO:0000269" key="5">
    <source>
    </source>
</evidence>
<evidence type="ECO:0000303" key="6">
    <source>
    </source>
</evidence>
<evidence type="ECO:0000305" key="7"/>
<evidence type="ECO:0000312" key="8">
    <source>
        <dbReference type="Proteomes" id="UP000001940"/>
    </source>
</evidence>
<evidence type="ECO:0000312" key="9">
    <source>
        <dbReference type="WormBase" id="F32H2.1a"/>
    </source>
</evidence>
<evidence type="ECO:0000312" key="10">
    <source>
        <dbReference type="WormBase" id="F32H2.1b"/>
    </source>
</evidence>
<keyword id="KW-0025">Alternative splicing</keyword>
<keyword id="KW-0238">DNA-binding</keyword>
<keyword id="KW-0539">Nucleus</keyword>
<keyword id="KW-1185">Reference proteome</keyword>
<keyword id="KW-0677">Repeat</keyword>
<keyword id="KW-0804">Transcription</keyword>
<keyword id="KW-0805">Transcription regulation</keyword>
<feature type="chain" id="PRO_0000433018" description="snRNA-activating protein complex subunit 4 homolog">
    <location>
        <begin position="1"/>
        <end position="944"/>
    </location>
</feature>
<feature type="domain" description="Myb-like 1" evidence="2">
    <location>
        <begin position="177"/>
        <end position="244"/>
    </location>
</feature>
<feature type="domain" description="HTH myb-type 1" evidence="3">
    <location>
        <begin position="245"/>
        <end position="301"/>
    </location>
</feature>
<feature type="domain" description="Myb-like 2" evidence="2">
    <location>
        <begin position="304"/>
        <end position="350"/>
    </location>
</feature>
<feature type="domain" description="HTH myb-type 2" evidence="3">
    <location>
        <begin position="351"/>
        <end position="406"/>
    </location>
</feature>
<feature type="domain" description="HTH myb-type 3" evidence="3">
    <location>
        <begin position="407"/>
        <end position="459"/>
    </location>
</feature>
<feature type="DNA-binding region" description="H-T-H motif" evidence="3">
    <location>
        <begin position="273"/>
        <end position="297"/>
    </location>
</feature>
<feature type="DNA-binding region" description="H-T-H motif" evidence="3">
    <location>
        <begin position="379"/>
        <end position="402"/>
    </location>
</feature>
<feature type="DNA-binding region" description="H-T-H motif" evidence="3">
    <location>
        <begin position="432"/>
        <end position="455"/>
    </location>
</feature>
<feature type="region of interest" description="Disordered" evidence="4">
    <location>
        <begin position="1"/>
        <end position="22"/>
    </location>
</feature>
<feature type="region of interest" description="Disordered" evidence="4">
    <location>
        <begin position="911"/>
        <end position="935"/>
    </location>
</feature>
<feature type="compositionally biased region" description="Polar residues" evidence="4">
    <location>
        <begin position="11"/>
        <end position="22"/>
    </location>
</feature>
<feature type="compositionally biased region" description="Low complexity" evidence="4">
    <location>
        <begin position="911"/>
        <end position="921"/>
    </location>
</feature>
<feature type="compositionally biased region" description="Polar residues" evidence="4">
    <location>
        <begin position="922"/>
        <end position="935"/>
    </location>
</feature>
<feature type="splice variant" id="VSP_057656" description="In isoform b." evidence="7">
    <location>
        <begin position="889"/>
        <end position="904"/>
    </location>
</feature>
<accession>P91868</accession>
<accession>O62208</accession>
<comment type="function">
    <text evidence="5">Binds to the promoter regions of RNA polymerase II and III small-nuclear RNA genes, type 3 RNA polymerase III non-coding RNA genes, small nucleolar RNAs and transfer RNA genes. Required for expression of mature 21U-RNAs.</text>
</comment>
<comment type="subcellular location">
    <subcellularLocation>
        <location evidence="3 5">Nucleus</location>
    </subcellularLocation>
    <text evidence="5">Diffuse nuclear localization. Concentrated in foci within nuclei of proliferating and pachytene germ cells. Foci localization is dependent on prde-1 activity.</text>
</comment>
<comment type="alternative products">
    <event type="alternative splicing"/>
    <isoform>
        <id>P91868-1</id>
        <name evidence="9">a</name>
        <sequence type="displayed"/>
    </isoform>
    <isoform>
        <id>P91868-2</id>
        <name evidence="10">b</name>
        <sequence type="described" ref="VSP_057656"/>
    </isoform>
</comment>
<comment type="tissue specificity">
    <text evidence="5">Broadly expressed in all tissues, including head, vulva and tail.</text>
</comment>
<comment type="developmental stage">
    <text evidence="5">Expressed throughout development.</text>
</comment>
<comment type="disruption phenotype">
    <text evidence="5">RNAi-mediated knockdown from larval stage L1 results in decreased 21U-RNA expression and disrupted distribution of prde-1 foci within the nuclei of germ cells.</text>
</comment>